<proteinExistence type="inferred from homology"/>
<feature type="chain" id="PRO_0000345329" description="tRNA uridine 5-carboxymethylaminomethyl modification enzyme MnmG">
    <location>
        <begin position="1"/>
        <end position="624"/>
    </location>
</feature>
<feature type="binding site" evidence="1">
    <location>
        <begin position="15"/>
        <end position="20"/>
    </location>
    <ligand>
        <name>FAD</name>
        <dbReference type="ChEBI" id="CHEBI:57692"/>
    </ligand>
</feature>
<feature type="binding site" evidence="1">
    <location>
        <position position="127"/>
    </location>
    <ligand>
        <name>FAD</name>
        <dbReference type="ChEBI" id="CHEBI:57692"/>
    </ligand>
</feature>
<feature type="binding site" evidence="1">
    <location>
        <position position="182"/>
    </location>
    <ligand>
        <name>FAD</name>
        <dbReference type="ChEBI" id="CHEBI:57692"/>
    </ligand>
</feature>
<feature type="binding site" evidence="1">
    <location>
        <begin position="275"/>
        <end position="289"/>
    </location>
    <ligand>
        <name>NAD(+)</name>
        <dbReference type="ChEBI" id="CHEBI:57540"/>
    </ligand>
</feature>
<feature type="binding site" evidence="1">
    <location>
        <position position="372"/>
    </location>
    <ligand>
        <name>FAD</name>
        <dbReference type="ChEBI" id="CHEBI:57692"/>
    </ligand>
</feature>
<gene>
    <name evidence="1" type="primary">mnmG</name>
    <name evidence="1" type="synonym">gidA</name>
    <name type="ordered locus">Rmag_0068</name>
</gene>
<name>MNMG_RUTMC</name>
<protein>
    <recommendedName>
        <fullName evidence="1">tRNA uridine 5-carboxymethylaminomethyl modification enzyme MnmG</fullName>
    </recommendedName>
    <alternativeName>
        <fullName evidence="1">Glucose-inhibited division protein A</fullName>
    </alternativeName>
</protein>
<accession>A1AVB1</accession>
<reference key="1">
    <citation type="journal article" date="2007" name="Science">
        <title>The Calyptogena magnifica chemoautotrophic symbiont genome.</title>
        <authorList>
            <person name="Newton I.L.G."/>
            <person name="Woyke T."/>
            <person name="Auchtung T.A."/>
            <person name="Dilly G.F."/>
            <person name="Dutton R.J."/>
            <person name="Fisher M.C."/>
            <person name="Fontanez K.M."/>
            <person name="Lau E."/>
            <person name="Stewart F.J."/>
            <person name="Richardson P.M."/>
            <person name="Barry K.W."/>
            <person name="Saunders E."/>
            <person name="Detter J.C."/>
            <person name="Wu D."/>
            <person name="Eisen J.A."/>
            <person name="Cavanaugh C.M."/>
        </authorList>
    </citation>
    <scope>NUCLEOTIDE SEQUENCE [LARGE SCALE GENOMIC DNA]</scope>
</reference>
<keyword id="KW-0963">Cytoplasm</keyword>
<keyword id="KW-0274">FAD</keyword>
<keyword id="KW-0285">Flavoprotein</keyword>
<keyword id="KW-0520">NAD</keyword>
<keyword id="KW-0819">tRNA processing</keyword>
<evidence type="ECO:0000255" key="1">
    <source>
        <dbReference type="HAMAP-Rule" id="MF_00129"/>
    </source>
</evidence>
<dbReference type="EMBL" id="CP000488">
    <property type="protein sequence ID" value="ABL01868.1"/>
    <property type="molecule type" value="Genomic_DNA"/>
</dbReference>
<dbReference type="SMR" id="A1AVB1"/>
<dbReference type="STRING" id="413404.Rmag_0068"/>
<dbReference type="KEGG" id="rma:Rmag_0068"/>
<dbReference type="eggNOG" id="COG0445">
    <property type="taxonomic scope" value="Bacteria"/>
</dbReference>
<dbReference type="HOGENOM" id="CLU_007831_2_2_6"/>
<dbReference type="Proteomes" id="UP000002587">
    <property type="component" value="Chromosome"/>
</dbReference>
<dbReference type="GO" id="GO:0005829">
    <property type="term" value="C:cytosol"/>
    <property type="evidence" value="ECO:0007669"/>
    <property type="project" value="TreeGrafter"/>
</dbReference>
<dbReference type="GO" id="GO:0050660">
    <property type="term" value="F:flavin adenine dinucleotide binding"/>
    <property type="evidence" value="ECO:0007669"/>
    <property type="project" value="UniProtKB-UniRule"/>
</dbReference>
<dbReference type="GO" id="GO:0030488">
    <property type="term" value="P:tRNA methylation"/>
    <property type="evidence" value="ECO:0007669"/>
    <property type="project" value="TreeGrafter"/>
</dbReference>
<dbReference type="GO" id="GO:0002098">
    <property type="term" value="P:tRNA wobble uridine modification"/>
    <property type="evidence" value="ECO:0007669"/>
    <property type="project" value="InterPro"/>
</dbReference>
<dbReference type="FunFam" id="1.10.10.1800:FF:000001">
    <property type="entry name" value="tRNA uridine 5-carboxymethylaminomethyl modification enzyme MnmG"/>
    <property type="match status" value="1"/>
</dbReference>
<dbReference type="FunFam" id="1.10.150.570:FF:000001">
    <property type="entry name" value="tRNA uridine 5-carboxymethylaminomethyl modification enzyme MnmG"/>
    <property type="match status" value="1"/>
</dbReference>
<dbReference type="FunFam" id="3.50.50.60:FF:000002">
    <property type="entry name" value="tRNA uridine 5-carboxymethylaminomethyl modification enzyme MnmG"/>
    <property type="match status" value="1"/>
</dbReference>
<dbReference type="FunFam" id="3.50.50.60:FF:000010">
    <property type="entry name" value="tRNA uridine 5-carboxymethylaminomethyl modification enzyme MnmG"/>
    <property type="match status" value="1"/>
</dbReference>
<dbReference type="Gene3D" id="3.50.50.60">
    <property type="entry name" value="FAD/NAD(P)-binding domain"/>
    <property type="match status" value="2"/>
</dbReference>
<dbReference type="Gene3D" id="1.10.150.570">
    <property type="entry name" value="GidA associated domain, C-terminal subdomain"/>
    <property type="match status" value="1"/>
</dbReference>
<dbReference type="Gene3D" id="1.10.10.1800">
    <property type="entry name" value="tRNA uridine 5-carboxymethylaminomethyl modification enzyme MnmG/GidA"/>
    <property type="match status" value="1"/>
</dbReference>
<dbReference type="HAMAP" id="MF_00129">
    <property type="entry name" value="MnmG_GidA"/>
    <property type="match status" value="1"/>
</dbReference>
<dbReference type="InterPro" id="IPR036188">
    <property type="entry name" value="FAD/NAD-bd_sf"/>
</dbReference>
<dbReference type="InterPro" id="IPR049312">
    <property type="entry name" value="GIDA_C_N"/>
</dbReference>
<dbReference type="InterPro" id="IPR004416">
    <property type="entry name" value="MnmG"/>
</dbReference>
<dbReference type="InterPro" id="IPR002218">
    <property type="entry name" value="MnmG-rel"/>
</dbReference>
<dbReference type="InterPro" id="IPR020595">
    <property type="entry name" value="MnmG-rel_CS"/>
</dbReference>
<dbReference type="InterPro" id="IPR026904">
    <property type="entry name" value="MnmG_C"/>
</dbReference>
<dbReference type="InterPro" id="IPR047001">
    <property type="entry name" value="MnmG_C_subdom"/>
</dbReference>
<dbReference type="InterPro" id="IPR044920">
    <property type="entry name" value="MnmG_C_subdom_sf"/>
</dbReference>
<dbReference type="InterPro" id="IPR040131">
    <property type="entry name" value="MnmG_N"/>
</dbReference>
<dbReference type="NCBIfam" id="TIGR00136">
    <property type="entry name" value="mnmG_gidA"/>
    <property type="match status" value="1"/>
</dbReference>
<dbReference type="PANTHER" id="PTHR11806">
    <property type="entry name" value="GLUCOSE INHIBITED DIVISION PROTEIN A"/>
    <property type="match status" value="1"/>
</dbReference>
<dbReference type="PANTHER" id="PTHR11806:SF0">
    <property type="entry name" value="PROTEIN MTO1 HOMOLOG, MITOCHONDRIAL"/>
    <property type="match status" value="1"/>
</dbReference>
<dbReference type="Pfam" id="PF01134">
    <property type="entry name" value="GIDA"/>
    <property type="match status" value="1"/>
</dbReference>
<dbReference type="Pfam" id="PF21680">
    <property type="entry name" value="GIDA_C_1st"/>
    <property type="match status" value="1"/>
</dbReference>
<dbReference type="Pfam" id="PF13932">
    <property type="entry name" value="SAM_GIDA_C"/>
    <property type="match status" value="1"/>
</dbReference>
<dbReference type="SMART" id="SM01228">
    <property type="entry name" value="GIDA_assoc_3"/>
    <property type="match status" value="1"/>
</dbReference>
<dbReference type="SUPFAM" id="SSF51905">
    <property type="entry name" value="FAD/NAD(P)-binding domain"/>
    <property type="match status" value="1"/>
</dbReference>
<dbReference type="PROSITE" id="PS01280">
    <property type="entry name" value="GIDA_1"/>
    <property type="match status" value="1"/>
</dbReference>
<dbReference type="PROSITE" id="PS01281">
    <property type="entry name" value="GIDA_2"/>
    <property type="match status" value="1"/>
</dbReference>
<sequence>MNMGQAKSYSVIVIGGGHAGTEAALSSARMGVCTLLISHNIETLGQMSCNPAIGGIGKGHLVKEIDAMGGIMARAIDKSGIQFRTLNASKGPAVRATRAQADRILYKAQIRYTLENQDNLSLFQQAVDDLIIEHDQIKGVVTQMGLAFMADKVILTSGTFLGGVIHIGQRNFQGGRAGDAPSNALSGKLRSYDLRVSRLKTGTPPRLDNRTLNYSLMQVQPGDTPLPTFSFMGVKEDHPRQIPCYITHTNEKTHDLIRDGLKDSPMFTGNIEGISPRYCPSIEDKVVRFSERDSHQIFVEPEGLTTNEVYPNGVSTSLSYEVQLNFIRSIKGFEKAHIIRPGYAIEYDFFDPRGLKQTLEVKKISGLYFAGQINGTTGYEEAAAQGLLAGVNAACAILERDAWLPKRNESYIGVMVDDLITKGANEPYRMFTSRAEYRLLLREDNADERLTPKARDLGLISEVCWQSFQVKYEAITQEKNRLKNTWIQASDTQAGVVLNQNLNHEYSLLELLKRPKIDYQILSQIESGKPFLTDATLINSIENQIKYAGYIKRQLEEIEKYRKNENTILSVNIDYDSIKALSSEVRQKLELHKPETIGQASRIQGVTPASISILLVYLKTYQSK</sequence>
<organism>
    <name type="scientific">Ruthia magnifica subsp. Calyptogena magnifica</name>
    <dbReference type="NCBI Taxonomy" id="413404"/>
    <lineage>
        <taxon>Bacteria</taxon>
        <taxon>Pseudomonadati</taxon>
        <taxon>Pseudomonadota</taxon>
        <taxon>Gammaproteobacteria</taxon>
        <taxon>Candidatus Pseudothioglobaceae</taxon>
        <taxon>Candidatus Ruthturnera</taxon>
    </lineage>
</organism>
<comment type="function">
    <text evidence="1">NAD-binding protein involved in the addition of a carboxymethylaminomethyl (cmnm) group at the wobble position (U34) of certain tRNAs, forming tRNA-cmnm(5)s(2)U34.</text>
</comment>
<comment type="cofactor">
    <cofactor evidence="1">
        <name>FAD</name>
        <dbReference type="ChEBI" id="CHEBI:57692"/>
    </cofactor>
</comment>
<comment type="subunit">
    <text evidence="1">Homodimer. Heterotetramer of two MnmE and two MnmG subunits.</text>
</comment>
<comment type="subcellular location">
    <subcellularLocation>
        <location evidence="1">Cytoplasm</location>
    </subcellularLocation>
</comment>
<comment type="similarity">
    <text evidence="1">Belongs to the MnmG family.</text>
</comment>